<protein>
    <recommendedName>
        <fullName evidence="1">Succinate--CoA ligase [ADP-forming] subunit beta</fullName>
        <ecNumber evidence="1">6.2.1.5</ecNumber>
    </recommendedName>
    <alternativeName>
        <fullName evidence="1">Succinyl-CoA synthetase subunit beta</fullName>
        <shortName evidence="1">SCS-beta</shortName>
    </alternativeName>
</protein>
<sequence length="397" mass="42228">MNIHEYQAKALLRSYGAPVSDGRVVLKADEAKSAAGELGGPLWVVKAQIHAGGRGKGKFKEPEAGEKGGVRLAKSVGEAAELAKQMLGRTLVTHQTGPAGKQVNRIYIEEGSDIARELYLALLVDRGTSRISFVVSTEGGMDIEEVAASTPEKIVSFSVDPASGLSDFHGRRVAFALGLEGAQVKQCVQLVKNLYRAFVEKDMEMLEINPLIVMTDGNLKVLDAKVGFDNNALYRQSDVMALRDETEEDPKELAASKFDLNYIALDGEIGCMVNGAGLAMATMDIIKLYGAEPANFLDVGGGATKEKVTEAFKIITSDPNVKGILVNIFGGIMRCDIIAEGIIAAVKEVGLQVPLVVRLEGTNVEKGKEIIANSGLNVIAGDNLSDAAQKIVKAVKG</sequence>
<dbReference type="EC" id="6.2.1.5" evidence="1"/>
<dbReference type="EMBL" id="CP000143">
    <property type="protein sequence ID" value="ABA80150.1"/>
    <property type="molecule type" value="Genomic_DNA"/>
</dbReference>
<dbReference type="RefSeq" id="WP_002721255.1">
    <property type="nucleotide sequence ID" value="NZ_CP030271.1"/>
</dbReference>
<dbReference type="RefSeq" id="YP_354051.1">
    <property type="nucleotide sequence ID" value="NC_007493.2"/>
</dbReference>
<dbReference type="SMR" id="Q3IZ84"/>
<dbReference type="STRING" id="272943.RSP_0967"/>
<dbReference type="EnsemblBacteria" id="ABA80150">
    <property type="protein sequence ID" value="ABA80150"/>
    <property type="gene ID" value="RSP_0967"/>
</dbReference>
<dbReference type="GeneID" id="67447738"/>
<dbReference type="KEGG" id="rsp:RSP_0967"/>
<dbReference type="PATRIC" id="fig|272943.9.peg.2939"/>
<dbReference type="eggNOG" id="COG0045">
    <property type="taxonomic scope" value="Bacteria"/>
</dbReference>
<dbReference type="OrthoDB" id="9802602at2"/>
<dbReference type="PhylomeDB" id="Q3IZ84"/>
<dbReference type="UniPathway" id="UPA00223">
    <property type="reaction ID" value="UER00999"/>
</dbReference>
<dbReference type="Proteomes" id="UP000002703">
    <property type="component" value="Chromosome 1"/>
</dbReference>
<dbReference type="GO" id="GO:0005829">
    <property type="term" value="C:cytosol"/>
    <property type="evidence" value="ECO:0007669"/>
    <property type="project" value="TreeGrafter"/>
</dbReference>
<dbReference type="GO" id="GO:0042709">
    <property type="term" value="C:succinate-CoA ligase complex"/>
    <property type="evidence" value="ECO:0007669"/>
    <property type="project" value="TreeGrafter"/>
</dbReference>
<dbReference type="GO" id="GO:0005524">
    <property type="term" value="F:ATP binding"/>
    <property type="evidence" value="ECO:0007669"/>
    <property type="project" value="UniProtKB-UniRule"/>
</dbReference>
<dbReference type="GO" id="GO:0000287">
    <property type="term" value="F:magnesium ion binding"/>
    <property type="evidence" value="ECO:0007669"/>
    <property type="project" value="UniProtKB-UniRule"/>
</dbReference>
<dbReference type="GO" id="GO:0004775">
    <property type="term" value="F:succinate-CoA ligase (ADP-forming) activity"/>
    <property type="evidence" value="ECO:0007669"/>
    <property type="project" value="UniProtKB-UniRule"/>
</dbReference>
<dbReference type="GO" id="GO:0004776">
    <property type="term" value="F:succinate-CoA ligase (GDP-forming) activity"/>
    <property type="evidence" value="ECO:0007669"/>
    <property type="project" value="RHEA"/>
</dbReference>
<dbReference type="GO" id="GO:0006104">
    <property type="term" value="P:succinyl-CoA metabolic process"/>
    <property type="evidence" value="ECO:0007669"/>
    <property type="project" value="TreeGrafter"/>
</dbReference>
<dbReference type="GO" id="GO:0006099">
    <property type="term" value="P:tricarboxylic acid cycle"/>
    <property type="evidence" value="ECO:0007669"/>
    <property type="project" value="UniProtKB-UniRule"/>
</dbReference>
<dbReference type="FunFam" id="3.30.1490.20:FF:000002">
    <property type="entry name" value="Succinate--CoA ligase [ADP-forming] subunit beta"/>
    <property type="match status" value="1"/>
</dbReference>
<dbReference type="FunFam" id="3.30.470.20:FF:000002">
    <property type="entry name" value="Succinate--CoA ligase [ADP-forming] subunit beta"/>
    <property type="match status" value="1"/>
</dbReference>
<dbReference type="FunFam" id="3.40.50.261:FF:000001">
    <property type="entry name" value="Succinate--CoA ligase [ADP-forming] subunit beta"/>
    <property type="match status" value="1"/>
</dbReference>
<dbReference type="Gene3D" id="3.30.1490.20">
    <property type="entry name" value="ATP-grasp fold, A domain"/>
    <property type="match status" value="1"/>
</dbReference>
<dbReference type="Gene3D" id="3.30.470.20">
    <property type="entry name" value="ATP-grasp fold, B domain"/>
    <property type="match status" value="1"/>
</dbReference>
<dbReference type="Gene3D" id="3.40.50.261">
    <property type="entry name" value="Succinyl-CoA synthetase domains"/>
    <property type="match status" value="1"/>
</dbReference>
<dbReference type="HAMAP" id="MF_00558">
    <property type="entry name" value="Succ_CoA_beta"/>
    <property type="match status" value="1"/>
</dbReference>
<dbReference type="InterPro" id="IPR011761">
    <property type="entry name" value="ATP-grasp"/>
</dbReference>
<dbReference type="InterPro" id="IPR013650">
    <property type="entry name" value="ATP-grasp_succ-CoA_synth-type"/>
</dbReference>
<dbReference type="InterPro" id="IPR013815">
    <property type="entry name" value="ATP_grasp_subdomain_1"/>
</dbReference>
<dbReference type="InterPro" id="IPR017866">
    <property type="entry name" value="Succ-CoA_synthase_bsu_CS"/>
</dbReference>
<dbReference type="InterPro" id="IPR005811">
    <property type="entry name" value="SUCC_ACL_C"/>
</dbReference>
<dbReference type="InterPro" id="IPR005809">
    <property type="entry name" value="Succ_CoA_ligase-like_bsu"/>
</dbReference>
<dbReference type="InterPro" id="IPR016102">
    <property type="entry name" value="Succinyl-CoA_synth-like"/>
</dbReference>
<dbReference type="NCBIfam" id="NF001913">
    <property type="entry name" value="PRK00696.1"/>
    <property type="match status" value="1"/>
</dbReference>
<dbReference type="NCBIfam" id="TIGR01016">
    <property type="entry name" value="sucCoAbeta"/>
    <property type="match status" value="1"/>
</dbReference>
<dbReference type="PANTHER" id="PTHR11815:SF10">
    <property type="entry name" value="SUCCINATE--COA LIGASE [GDP-FORMING] SUBUNIT BETA, MITOCHONDRIAL"/>
    <property type="match status" value="1"/>
</dbReference>
<dbReference type="PANTHER" id="PTHR11815">
    <property type="entry name" value="SUCCINYL-COA SYNTHETASE BETA CHAIN"/>
    <property type="match status" value="1"/>
</dbReference>
<dbReference type="Pfam" id="PF08442">
    <property type="entry name" value="ATP-grasp_2"/>
    <property type="match status" value="1"/>
</dbReference>
<dbReference type="Pfam" id="PF00549">
    <property type="entry name" value="Ligase_CoA"/>
    <property type="match status" value="1"/>
</dbReference>
<dbReference type="PIRSF" id="PIRSF001554">
    <property type="entry name" value="SucCS_beta"/>
    <property type="match status" value="1"/>
</dbReference>
<dbReference type="SUPFAM" id="SSF56059">
    <property type="entry name" value="Glutathione synthetase ATP-binding domain-like"/>
    <property type="match status" value="1"/>
</dbReference>
<dbReference type="SUPFAM" id="SSF52210">
    <property type="entry name" value="Succinyl-CoA synthetase domains"/>
    <property type="match status" value="1"/>
</dbReference>
<dbReference type="PROSITE" id="PS50975">
    <property type="entry name" value="ATP_GRASP"/>
    <property type="match status" value="1"/>
</dbReference>
<dbReference type="PROSITE" id="PS01217">
    <property type="entry name" value="SUCCINYL_COA_LIG_3"/>
    <property type="match status" value="1"/>
</dbReference>
<gene>
    <name evidence="1" type="primary">sucC</name>
    <name type="ordered locus">RHOS4_25820</name>
    <name type="ORF">RSP_0967</name>
</gene>
<accession>Q3IZ84</accession>
<proteinExistence type="inferred from homology"/>
<comment type="function">
    <text evidence="1">Succinyl-CoA synthetase functions in the citric acid cycle (TCA), coupling the hydrolysis of succinyl-CoA to the synthesis of either ATP or GTP and thus represents the only step of substrate-level phosphorylation in the TCA. The beta subunit provides nucleotide specificity of the enzyme and binds the substrate succinate, while the binding sites for coenzyme A and phosphate are found in the alpha subunit.</text>
</comment>
<comment type="catalytic activity">
    <reaction evidence="1">
        <text>succinate + ATP + CoA = succinyl-CoA + ADP + phosphate</text>
        <dbReference type="Rhea" id="RHEA:17661"/>
        <dbReference type="ChEBI" id="CHEBI:30031"/>
        <dbReference type="ChEBI" id="CHEBI:30616"/>
        <dbReference type="ChEBI" id="CHEBI:43474"/>
        <dbReference type="ChEBI" id="CHEBI:57287"/>
        <dbReference type="ChEBI" id="CHEBI:57292"/>
        <dbReference type="ChEBI" id="CHEBI:456216"/>
        <dbReference type="EC" id="6.2.1.5"/>
    </reaction>
    <physiologicalReaction direction="right-to-left" evidence="1">
        <dbReference type="Rhea" id="RHEA:17663"/>
    </physiologicalReaction>
</comment>
<comment type="catalytic activity">
    <reaction evidence="1">
        <text>GTP + succinate + CoA = succinyl-CoA + GDP + phosphate</text>
        <dbReference type="Rhea" id="RHEA:22120"/>
        <dbReference type="ChEBI" id="CHEBI:30031"/>
        <dbReference type="ChEBI" id="CHEBI:37565"/>
        <dbReference type="ChEBI" id="CHEBI:43474"/>
        <dbReference type="ChEBI" id="CHEBI:57287"/>
        <dbReference type="ChEBI" id="CHEBI:57292"/>
        <dbReference type="ChEBI" id="CHEBI:58189"/>
    </reaction>
    <physiologicalReaction direction="right-to-left" evidence="1">
        <dbReference type="Rhea" id="RHEA:22122"/>
    </physiologicalReaction>
</comment>
<comment type="cofactor">
    <cofactor evidence="1">
        <name>Mg(2+)</name>
        <dbReference type="ChEBI" id="CHEBI:18420"/>
    </cofactor>
    <text evidence="1">Binds 1 Mg(2+) ion per subunit.</text>
</comment>
<comment type="pathway">
    <text evidence="1">Carbohydrate metabolism; tricarboxylic acid cycle; succinate from succinyl-CoA (ligase route): step 1/1.</text>
</comment>
<comment type="subunit">
    <text evidence="1">Heterotetramer of two alpha and two beta subunits.</text>
</comment>
<comment type="similarity">
    <text evidence="1">Belongs to the succinate/malate CoA ligase beta subunit family.</text>
</comment>
<name>SUCC_CERS4</name>
<evidence type="ECO:0000255" key="1">
    <source>
        <dbReference type="HAMAP-Rule" id="MF_00558"/>
    </source>
</evidence>
<feature type="chain" id="PRO_1000082196" description="Succinate--CoA ligase [ADP-forming] subunit beta">
    <location>
        <begin position="1"/>
        <end position="397"/>
    </location>
</feature>
<feature type="domain" description="ATP-grasp" evidence="1">
    <location>
        <begin position="9"/>
        <end position="254"/>
    </location>
</feature>
<feature type="binding site" evidence="1">
    <location>
        <position position="46"/>
    </location>
    <ligand>
        <name>ATP</name>
        <dbReference type="ChEBI" id="CHEBI:30616"/>
    </ligand>
</feature>
<feature type="binding site" evidence="1">
    <location>
        <begin position="53"/>
        <end position="55"/>
    </location>
    <ligand>
        <name>ATP</name>
        <dbReference type="ChEBI" id="CHEBI:30616"/>
    </ligand>
</feature>
<feature type="binding site" evidence="1">
    <location>
        <position position="109"/>
    </location>
    <ligand>
        <name>ATP</name>
        <dbReference type="ChEBI" id="CHEBI:30616"/>
    </ligand>
</feature>
<feature type="binding site" evidence="1">
    <location>
        <position position="112"/>
    </location>
    <ligand>
        <name>ATP</name>
        <dbReference type="ChEBI" id="CHEBI:30616"/>
    </ligand>
</feature>
<feature type="binding site" evidence="1">
    <location>
        <position position="117"/>
    </location>
    <ligand>
        <name>ATP</name>
        <dbReference type="ChEBI" id="CHEBI:30616"/>
    </ligand>
</feature>
<feature type="binding site" evidence="1">
    <location>
        <position position="209"/>
    </location>
    <ligand>
        <name>Mg(2+)</name>
        <dbReference type="ChEBI" id="CHEBI:18420"/>
    </ligand>
</feature>
<feature type="binding site" evidence="1">
    <location>
        <position position="223"/>
    </location>
    <ligand>
        <name>Mg(2+)</name>
        <dbReference type="ChEBI" id="CHEBI:18420"/>
    </ligand>
</feature>
<feature type="binding site" evidence="1">
    <location>
        <position position="274"/>
    </location>
    <ligand>
        <name>substrate</name>
        <note>ligand shared with subunit alpha</note>
    </ligand>
</feature>
<feature type="binding site" evidence="1">
    <location>
        <begin position="331"/>
        <end position="333"/>
    </location>
    <ligand>
        <name>substrate</name>
        <note>ligand shared with subunit alpha</note>
    </ligand>
</feature>
<reference key="1">
    <citation type="submission" date="2005-09" db="EMBL/GenBank/DDBJ databases">
        <title>Complete sequence of chromosome 1 of Rhodobacter sphaeroides 2.4.1.</title>
        <authorList>
            <person name="Copeland A."/>
            <person name="Lucas S."/>
            <person name="Lapidus A."/>
            <person name="Barry K."/>
            <person name="Detter J.C."/>
            <person name="Glavina T."/>
            <person name="Hammon N."/>
            <person name="Israni S."/>
            <person name="Pitluck S."/>
            <person name="Richardson P."/>
            <person name="Mackenzie C."/>
            <person name="Choudhary M."/>
            <person name="Larimer F."/>
            <person name="Hauser L.J."/>
            <person name="Land M."/>
            <person name="Donohue T.J."/>
            <person name="Kaplan S."/>
        </authorList>
    </citation>
    <scope>NUCLEOTIDE SEQUENCE [LARGE SCALE GENOMIC DNA]</scope>
    <source>
        <strain>ATCC 17023 / DSM 158 / JCM 6121 / CCUG 31486 / LMG 2827 / NBRC 12203 / NCIMB 8253 / ATH 2.4.1.</strain>
    </source>
</reference>
<organism>
    <name type="scientific">Cereibacter sphaeroides (strain ATCC 17023 / DSM 158 / JCM 6121 / CCUG 31486 / LMG 2827 / NBRC 12203 / NCIMB 8253 / ATH 2.4.1.)</name>
    <name type="common">Rhodobacter sphaeroides</name>
    <dbReference type="NCBI Taxonomy" id="272943"/>
    <lineage>
        <taxon>Bacteria</taxon>
        <taxon>Pseudomonadati</taxon>
        <taxon>Pseudomonadota</taxon>
        <taxon>Alphaproteobacteria</taxon>
        <taxon>Rhodobacterales</taxon>
        <taxon>Paracoccaceae</taxon>
        <taxon>Cereibacter</taxon>
    </lineage>
</organism>
<keyword id="KW-0067">ATP-binding</keyword>
<keyword id="KW-0436">Ligase</keyword>
<keyword id="KW-0460">Magnesium</keyword>
<keyword id="KW-0479">Metal-binding</keyword>
<keyword id="KW-0547">Nucleotide-binding</keyword>
<keyword id="KW-1185">Reference proteome</keyword>
<keyword id="KW-0816">Tricarboxylic acid cycle</keyword>